<dbReference type="EMBL" id="BX640437">
    <property type="protein sequence ID" value="CAE30678.1"/>
    <property type="molecule type" value="Genomic_DNA"/>
</dbReference>
<dbReference type="RefSeq" id="WP_010925724.1">
    <property type="nucleotide sequence ID" value="NC_002927.3"/>
</dbReference>
<dbReference type="SMR" id="Q7WQZ4"/>
<dbReference type="KEGG" id="bbr:BB0178"/>
<dbReference type="eggNOG" id="COG1220">
    <property type="taxonomic scope" value="Bacteria"/>
</dbReference>
<dbReference type="HOGENOM" id="CLU_033123_0_0_4"/>
<dbReference type="Proteomes" id="UP000001027">
    <property type="component" value="Chromosome"/>
</dbReference>
<dbReference type="GO" id="GO:0009376">
    <property type="term" value="C:HslUV protease complex"/>
    <property type="evidence" value="ECO:0007669"/>
    <property type="project" value="UniProtKB-UniRule"/>
</dbReference>
<dbReference type="GO" id="GO:0005524">
    <property type="term" value="F:ATP binding"/>
    <property type="evidence" value="ECO:0007669"/>
    <property type="project" value="UniProtKB-UniRule"/>
</dbReference>
<dbReference type="GO" id="GO:0016887">
    <property type="term" value="F:ATP hydrolysis activity"/>
    <property type="evidence" value="ECO:0007669"/>
    <property type="project" value="InterPro"/>
</dbReference>
<dbReference type="GO" id="GO:0008233">
    <property type="term" value="F:peptidase activity"/>
    <property type="evidence" value="ECO:0007669"/>
    <property type="project" value="InterPro"/>
</dbReference>
<dbReference type="GO" id="GO:0036402">
    <property type="term" value="F:proteasome-activating activity"/>
    <property type="evidence" value="ECO:0007669"/>
    <property type="project" value="UniProtKB-UniRule"/>
</dbReference>
<dbReference type="GO" id="GO:0043335">
    <property type="term" value="P:protein unfolding"/>
    <property type="evidence" value="ECO:0007669"/>
    <property type="project" value="UniProtKB-UniRule"/>
</dbReference>
<dbReference type="GO" id="GO:0051603">
    <property type="term" value="P:proteolysis involved in protein catabolic process"/>
    <property type="evidence" value="ECO:0007669"/>
    <property type="project" value="TreeGrafter"/>
</dbReference>
<dbReference type="CDD" id="cd19498">
    <property type="entry name" value="RecA-like_HslU"/>
    <property type="match status" value="1"/>
</dbReference>
<dbReference type="FunFam" id="3.40.50.300:FF:000213">
    <property type="entry name" value="ATP-dependent protease ATPase subunit HslU"/>
    <property type="match status" value="1"/>
</dbReference>
<dbReference type="FunFam" id="3.40.50.300:FF:000220">
    <property type="entry name" value="ATP-dependent protease ATPase subunit HslU"/>
    <property type="match status" value="1"/>
</dbReference>
<dbReference type="Gene3D" id="1.10.8.60">
    <property type="match status" value="1"/>
</dbReference>
<dbReference type="Gene3D" id="1.10.8.10">
    <property type="entry name" value="DNA helicase RuvA subunit, C-terminal domain"/>
    <property type="match status" value="1"/>
</dbReference>
<dbReference type="Gene3D" id="3.40.50.300">
    <property type="entry name" value="P-loop containing nucleotide triphosphate hydrolases"/>
    <property type="match status" value="2"/>
</dbReference>
<dbReference type="HAMAP" id="MF_00249">
    <property type="entry name" value="HslU"/>
    <property type="match status" value="1"/>
</dbReference>
<dbReference type="InterPro" id="IPR003593">
    <property type="entry name" value="AAA+_ATPase"/>
</dbReference>
<dbReference type="InterPro" id="IPR050052">
    <property type="entry name" value="ATP-dep_Clp_protease_ClpX"/>
</dbReference>
<dbReference type="InterPro" id="IPR003959">
    <property type="entry name" value="ATPase_AAA_core"/>
</dbReference>
<dbReference type="InterPro" id="IPR019489">
    <property type="entry name" value="Clp_ATPase_C"/>
</dbReference>
<dbReference type="InterPro" id="IPR004491">
    <property type="entry name" value="HslU"/>
</dbReference>
<dbReference type="InterPro" id="IPR027417">
    <property type="entry name" value="P-loop_NTPase"/>
</dbReference>
<dbReference type="NCBIfam" id="TIGR00390">
    <property type="entry name" value="hslU"/>
    <property type="match status" value="1"/>
</dbReference>
<dbReference type="NCBIfam" id="NF003544">
    <property type="entry name" value="PRK05201.1"/>
    <property type="match status" value="1"/>
</dbReference>
<dbReference type="PANTHER" id="PTHR48102">
    <property type="entry name" value="ATP-DEPENDENT CLP PROTEASE ATP-BINDING SUBUNIT CLPX-LIKE, MITOCHONDRIAL-RELATED"/>
    <property type="match status" value="1"/>
</dbReference>
<dbReference type="PANTHER" id="PTHR48102:SF3">
    <property type="entry name" value="ATP-DEPENDENT PROTEASE ATPASE SUBUNIT HSLU"/>
    <property type="match status" value="1"/>
</dbReference>
<dbReference type="Pfam" id="PF00004">
    <property type="entry name" value="AAA"/>
    <property type="match status" value="1"/>
</dbReference>
<dbReference type="Pfam" id="PF07724">
    <property type="entry name" value="AAA_2"/>
    <property type="match status" value="1"/>
</dbReference>
<dbReference type="SMART" id="SM00382">
    <property type="entry name" value="AAA"/>
    <property type="match status" value="1"/>
</dbReference>
<dbReference type="SMART" id="SM01086">
    <property type="entry name" value="ClpB_D2-small"/>
    <property type="match status" value="1"/>
</dbReference>
<dbReference type="SUPFAM" id="SSF52540">
    <property type="entry name" value="P-loop containing nucleoside triphosphate hydrolases"/>
    <property type="match status" value="1"/>
</dbReference>
<gene>
    <name evidence="1" type="primary">hslU</name>
    <name type="synonym">htpI</name>
    <name type="ordered locus">BB0178</name>
</gene>
<reference key="1">
    <citation type="journal article" date="2003" name="Nat. Genet.">
        <title>Comparative analysis of the genome sequences of Bordetella pertussis, Bordetella parapertussis and Bordetella bronchiseptica.</title>
        <authorList>
            <person name="Parkhill J."/>
            <person name="Sebaihia M."/>
            <person name="Preston A."/>
            <person name="Murphy L.D."/>
            <person name="Thomson N.R."/>
            <person name="Harris D.E."/>
            <person name="Holden M.T.G."/>
            <person name="Churcher C.M."/>
            <person name="Bentley S.D."/>
            <person name="Mungall K.L."/>
            <person name="Cerdeno-Tarraga A.-M."/>
            <person name="Temple L."/>
            <person name="James K.D."/>
            <person name="Harris B."/>
            <person name="Quail M.A."/>
            <person name="Achtman M."/>
            <person name="Atkin R."/>
            <person name="Baker S."/>
            <person name="Basham D."/>
            <person name="Bason N."/>
            <person name="Cherevach I."/>
            <person name="Chillingworth T."/>
            <person name="Collins M."/>
            <person name="Cronin A."/>
            <person name="Davis P."/>
            <person name="Doggett J."/>
            <person name="Feltwell T."/>
            <person name="Goble A."/>
            <person name="Hamlin N."/>
            <person name="Hauser H."/>
            <person name="Holroyd S."/>
            <person name="Jagels K."/>
            <person name="Leather S."/>
            <person name="Moule S."/>
            <person name="Norberczak H."/>
            <person name="O'Neil S."/>
            <person name="Ormond D."/>
            <person name="Price C."/>
            <person name="Rabbinowitsch E."/>
            <person name="Rutter S."/>
            <person name="Sanders M."/>
            <person name="Saunders D."/>
            <person name="Seeger K."/>
            <person name="Sharp S."/>
            <person name="Simmonds M."/>
            <person name="Skelton J."/>
            <person name="Squares R."/>
            <person name="Squares S."/>
            <person name="Stevens K."/>
            <person name="Unwin L."/>
            <person name="Whitehead S."/>
            <person name="Barrell B.G."/>
            <person name="Maskell D.J."/>
        </authorList>
    </citation>
    <scope>NUCLEOTIDE SEQUENCE [LARGE SCALE GENOMIC DNA]</scope>
    <source>
        <strain>ATCC BAA-588 / NCTC 13252 / RB50</strain>
    </source>
</reference>
<protein>
    <recommendedName>
        <fullName evidence="1">ATP-dependent protease ATPase subunit HslU</fullName>
    </recommendedName>
    <alternativeName>
        <fullName evidence="1">Unfoldase HslU</fullName>
    </alternativeName>
</protein>
<sequence length="444" mass="49729">MSANHMTPGEIVSELDKFIIGQNRAKRAVAVALRNRWRRQQVAEPLRHEIHPKNILMIGPTGVGKTEIARRLAKLANAPFIKIEATKFTEVGYVGRDVDTIIRDLTEYSIKQTRELEMRRVRSHAEDAAEDRILDALVPPPRGASGEPERGEDNSARQTFRKRLREGKIDDLEIEIEIAQPMPQMDVMTPPGMEEMAEQLRGMFAGLARDKKKSKKIKVREAFKLIVEEEAAKRVNEDDLRAAAITNVEQNGIVFLDEIDKIAARQETGGADVSRQGVQRDLLPLVEGTTVNTRYGMVRTDHILFIASGAFHLARPSDLIPELQGRFPIRVELDSLSAEDFVNILSETDASLIKQYTALLGTEDVKLEFTDDGIRRLAELAFSVNERTENIGARRLYTVMEKLLEELSFDASANSGEVITIDAAYVDLQLAETAGSQDLARYVL</sequence>
<accession>Q7WQZ4</accession>
<feature type="chain" id="PRO_0000160479" description="ATP-dependent protease ATPase subunit HslU">
    <location>
        <begin position="1"/>
        <end position="444"/>
    </location>
</feature>
<feature type="region of interest" description="Disordered" evidence="2">
    <location>
        <begin position="130"/>
        <end position="158"/>
    </location>
</feature>
<feature type="binding site" evidence="1">
    <location>
        <position position="20"/>
    </location>
    <ligand>
        <name>ATP</name>
        <dbReference type="ChEBI" id="CHEBI:30616"/>
    </ligand>
</feature>
<feature type="binding site" evidence="1">
    <location>
        <begin position="62"/>
        <end position="67"/>
    </location>
    <ligand>
        <name>ATP</name>
        <dbReference type="ChEBI" id="CHEBI:30616"/>
    </ligand>
</feature>
<feature type="binding site" evidence="1">
    <location>
        <position position="257"/>
    </location>
    <ligand>
        <name>ATP</name>
        <dbReference type="ChEBI" id="CHEBI:30616"/>
    </ligand>
</feature>
<feature type="binding site" evidence="1">
    <location>
        <position position="322"/>
    </location>
    <ligand>
        <name>ATP</name>
        <dbReference type="ChEBI" id="CHEBI:30616"/>
    </ligand>
</feature>
<feature type="binding site" evidence="1">
    <location>
        <position position="394"/>
    </location>
    <ligand>
        <name>ATP</name>
        <dbReference type="ChEBI" id="CHEBI:30616"/>
    </ligand>
</feature>
<name>HSLU_BORBR</name>
<organism>
    <name type="scientific">Bordetella bronchiseptica (strain ATCC BAA-588 / NCTC 13252 / RB50)</name>
    <name type="common">Alcaligenes bronchisepticus</name>
    <dbReference type="NCBI Taxonomy" id="257310"/>
    <lineage>
        <taxon>Bacteria</taxon>
        <taxon>Pseudomonadati</taxon>
        <taxon>Pseudomonadota</taxon>
        <taxon>Betaproteobacteria</taxon>
        <taxon>Burkholderiales</taxon>
        <taxon>Alcaligenaceae</taxon>
        <taxon>Bordetella</taxon>
    </lineage>
</organism>
<keyword id="KW-0067">ATP-binding</keyword>
<keyword id="KW-0143">Chaperone</keyword>
<keyword id="KW-0963">Cytoplasm</keyword>
<keyword id="KW-0547">Nucleotide-binding</keyword>
<evidence type="ECO:0000255" key="1">
    <source>
        <dbReference type="HAMAP-Rule" id="MF_00249"/>
    </source>
</evidence>
<evidence type="ECO:0000256" key="2">
    <source>
        <dbReference type="SAM" id="MobiDB-lite"/>
    </source>
</evidence>
<comment type="function">
    <text evidence="1">ATPase subunit of a proteasome-like degradation complex; this subunit has chaperone activity. The binding of ATP and its subsequent hydrolysis by HslU are essential for unfolding of protein substrates subsequently hydrolyzed by HslV. HslU recognizes the N-terminal part of its protein substrates and unfolds these before they are guided to HslV for hydrolysis.</text>
</comment>
<comment type="subunit">
    <text evidence="1">A double ring-shaped homohexamer of HslV is capped on each side by a ring-shaped HslU homohexamer. The assembly of the HslU/HslV complex is dependent on binding of ATP.</text>
</comment>
<comment type="subcellular location">
    <subcellularLocation>
        <location evidence="1">Cytoplasm</location>
    </subcellularLocation>
</comment>
<comment type="similarity">
    <text evidence="1">Belongs to the ClpX chaperone family. HslU subfamily.</text>
</comment>
<proteinExistence type="inferred from homology"/>